<proteinExistence type="inferred from homology"/>
<feature type="chain" id="PRO_1000143097" description="Small ribosomal subunit protein uS15">
    <location>
        <begin position="1"/>
        <end position="89"/>
    </location>
</feature>
<gene>
    <name evidence="1" type="primary">rpsO</name>
    <name type="ordered locus">cu0858</name>
</gene>
<name>RS15_CORU7</name>
<comment type="function">
    <text evidence="1">One of the primary rRNA binding proteins, it binds directly to 16S rRNA where it helps nucleate assembly of the platform of the 30S subunit by binding and bridging several RNA helices of the 16S rRNA.</text>
</comment>
<comment type="function">
    <text evidence="1">Forms an intersubunit bridge (bridge B4) with the 23S rRNA of the 50S subunit in the ribosome.</text>
</comment>
<comment type="subunit">
    <text evidence="1">Part of the 30S ribosomal subunit. Forms a bridge to the 50S subunit in the 70S ribosome, contacting the 23S rRNA.</text>
</comment>
<comment type="similarity">
    <text evidence="1">Belongs to the universal ribosomal protein uS15 family.</text>
</comment>
<sequence>MALSKDEKAATLKEFGLHETDTGSPEAQVALLSARINQLTEHLKDHKHDHHSRRGLLLLVGRRKGLLKYLASTDIERYRSLIERLGLRR</sequence>
<evidence type="ECO:0000255" key="1">
    <source>
        <dbReference type="HAMAP-Rule" id="MF_01343"/>
    </source>
</evidence>
<evidence type="ECO:0000305" key="2"/>
<keyword id="KW-1185">Reference proteome</keyword>
<keyword id="KW-0687">Ribonucleoprotein</keyword>
<keyword id="KW-0689">Ribosomal protein</keyword>
<keyword id="KW-0694">RNA-binding</keyword>
<keyword id="KW-0699">rRNA-binding</keyword>
<reference key="1">
    <citation type="journal article" date="2008" name="J. Biotechnol.">
        <title>The lifestyle of Corynebacterium urealyticum derived from its complete genome sequence established by pyrosequencing.</title>
        <authorList>
            <person name="Tauch A."/>
            <person name="Trost E."/>
            <person name="Tilker A."/>
            <person name="Ludewig U."/>
            <person name="Schneiker S."/>
            <person name="Goesmann A."/>
            <person name="Arnold W."/>
            <person name="Bekel T."/>
            <person name="Brinkrolf K."/>
            <person name="Brune I."/>
            <person name="Goetker S."/>
            <person name="Kalinowski J."/>
            <person name="Kamp P.-B."/>
            <person name="Lobo F.P."/>
            <person name="Viehoever P."/>
            <person name="Weisshaar B."/>
            <person name="Soriano F."/>
            <person name="Droege M."/>
            <person name="Puehler A."/>
        </authorList>
    </citation>
    <scope>NUCLEOTIDE SEQUENCE [LARGE SCALE GENOMIC DNA]</scope>
    <source>
        <strain>ATCC 43042 / DSM 7109</strain>
    </source>
</reference>
<protein>
    <recommendedName>
        <fullName evidence="1">Small ribosomal subunit protein uS15</fullName>
    </recommendedName>
    <alternativeName>
        <fullName evidence="2">30S ribosomal protein S15</fullName>
    </alternativeName>
</protein>
<accession>B1VDC0</accession>
<dbReference type="EMBL" id="AM942444">
    <property type="protein sequence ID" value="CAQ04818.1"/>
    <property type="molecule type" value="Genomic_DNA"/>
</dbReference>
<dbReference type="RefSeq" id="WP_012360107.1">
    <property type="nucleotide sequence ID" value="NC_010545.1"/>
</dbReference>
<dbReference type="SMR" id="B1VDC0"/>
<dbReference type="STRING" id="504474.cu0858"/>
<dbReference type="GeneID" id="60603634"/>
<dbReference type="KEGG" id="cur:cu0858"/>
<dbReference type="eggNOG" id="COG0184">
    <property type="taxonomic scope" value="Bacteria"/>
</dbReference>
<dbReference type="HOGENOM" id="CLU_148518_0_0_11"/>
<dbReference type="Proteomes" id="UP000001727">
    <property type="component" value="Chromosome"/>
</dbReference>
<dbReference type="GO" id="GO:0022627">
    <property type="term" value="C:cytosolic small ribosomal subunit"/>
    <property type="evidence" value="ECO:0007669"/>
    <property type="project" value="TreeGrafter"/>
</dbReference>
<dbReference type="GO" id="GO:0019843">
    <property type="term" value="F:rRNA binding"/>
    <property type="evidence" value="ECO:0007669"/>
    <property type="project" value="UniProtKB-UniRule"/>
</dbReference>
<dbReference type="GO" id="GO:0003735">
    <property type="term" value="F:structural constituent of ribosome"/>
    <property type="evidence" value="ECO:0007669"/>
    <property type="project" value="InterPro"/>
</dbReference>
<dbReference type="GO" id="GO:0006412">
    <property type="term" value="P:translation"/>
    <property type="evidence" value="ECO:0007669"/>
    <property type="project" value="UniProtKB-UniRule"/>
</dbReference>
<dbReference type="CDD" id="cd00353">
    <property type="entry name" value="Ribosomal_S15p_S13e"/>
    <property type="match status" value="1"/>
</dbReference>
<dbReference type="FunFam" id="1.10.287.10:FF:000002">
    <property type="entry name" value="30S ribosomal protein S15"/>
    <property type="match status" value="1"/>
</dbReference>
<dbReference type="Gene3D" id="6.10.250.3130">
    <property type="match status" value="1"/>
</dbReference>
<dbReference type="Gene3D" id="1.10.287.10">
    <property type="entry name" value="S15/NS1, RNA-binding"/>
    <property type="match status" value="1"/>
</dbReference>
<dbReference type="HAMAP" id="MF_01343_B">
    <property type="entry name" value="Ribosomal_uS15_B"/>
    <property type="match status" value="1"/>
</dbReference>
<dbReference type="InterPro" id="IPR000589">
    <property type="entry name" value="Ribosomal_uS15"/>
</dbReference>
<dbReference type="InterPro" id="IPR005290">
    <property type="entry name" value="Ribosomal_uS15_bac-type"/>
</dbReference>
<dbReference type="InterPro" id="IPR009068">
    <property type="entry name" value="uS15_NS1_RNA-bd_sf"/>
</dbReference>
<dbReference type="NCBIfam" id="TIGR00952">
    <property type="entry name" value="S15_bact"/>
    <property type="match status" value="1"/>
</dbReference>
<dbReference type="PANTHER" id="PTHR23321">
    <property type="entry name" value="RIBOSOMAL PROTEIN S15, BACTERIAL AND ORGANELLAR"/>
    <property type="match status" value="1"/>
</dbReference>
<dbReference type="PANTHER" id="PTHR23321:SF26">
    <property type="entry name" value="SMALL RIBOSOMAL SUBUNIT PROTEIN US15M"/>
    <property type="match status" value="1"/>
</dbReference>
<dbReference type="Pfam" id="PF00312">
    <property type="entry name" value="Ribosomal_S15"/>
    <property type="match status" value="1"/>
</dbReference>
<dbReference type="SMART" id="SM01387">
    <property type="entry name" value="Ribosomal_S15"/>
    <property type="match status" value="1"/>
</dbReference>
<dbReference type="SUPFAM" id="SSF47060">
    <property type="entry name" value="S15/NS1 RNA-binding domain"/>
    <property type="match status" value="1"/>
</dbReference>
<dbReference type="PROSITE" id="PS00362">
    <property type="entry name" value="RIBOSOMAL_S15"/>
    <property type="match status" value="1"/>
</dbReference>
<organism>
    <name type="scientific">Corynebacterium urealyticum (strain ATCC 43042 / DSM 7109)</name>
    <dbReference type="NCBI Taxonomy" id="504474"/>
    <lineage>
        <taxon>Bacteria</taxon>
        <taxon>Bacillati</taxon>
        <taxon>Actinomycetota</taxon>
        <taxon>Actinomycetes</taxon>
        <taxon>Mycobacteriales</taxon>
        <taxon>Corynebacteriaceae</taxon>
        <taxon>Corynebacterium</taxon>
    </lineage>
</organism>